<sequence>MKTKLNELLEFPTPFTYKVMGQALPELVDQVVEVVQRHAPGDYSPTVKPSSKGNYHSVSITINATHIEQVETLYEELGNIDIVRMVL</sequence>
<proteinExistence type="inferred from homology"/>
<accession>A9MKE1</accession>
<evidence type="ECO:0000255" key="1">
    <source>
        <dbReference type="HAMAP-Rule" id="MF_00659"/>
    </source>
</evidence>
<protein>
    <recommendedName>
        <fullName evidence="1">UPF0250 protein YbeD</fullName>
    </recommendedName>
</protein>
<dbReference type="EMBL" id="CP000880">
    <property type="protein sequence ID" value="ABX22160.1"/>
    <property type="molecule type" value="Genomic_DNA"/>
</dbReference>
<dbReference type="BMRB" id="A9MKE1"/>
<dbReference type="SMR" id="A9MKE1"/>
<dbReference type="STRING" id="41514.SARI_02297"/>
<dbReference type="KEGG" id="ses:SARI_02297"/>
<dbReference type="HOGENOM" id="CLU_161438_2_1_6"/>
<dbReference type="Proteomes" id="UP000002084">
    <property type="component" value="Chromosome"/>
</dbReference>
<dbReference type="GO" id="GO:0005829">
    <property type="term" value="C:cytosol"/>
    <property type="evidence" value="ECO:0007669"/>
    <property type="project" value="TreeGrafter"/>
</dbReference>
<dbReference type="FunFam" id="3.30.70.260:FF:000002">
    <property type="entry name" value="UPF0250 protein YbeD"/>
    <property type="match status" value="1"/>
</dbReference>
<dbReference type="Gene3D" id="3.30.70.260">
    <property type="match status" value="1"/>
</dbReference>
<dbReference type="HAMAP" id="MF_00659">
    <property type="entry name" value="UPF0250"/>
    <property type="match status" value="1"/>
</dbReference>
<dbReference type="InterPro" id="IPR007454">
    <property type="entry name" value="UPF0250_YbeD-like"/>
</dbReference>
<dbReference type="InterPro" id="IPR027471">
    <property type="entry name" value="YbeD-like_sf"/>
</dbReference>
<dbReference type="NCBIfam" id="NF003447">
    <property type="entry name" value="PRK04998.1"/>
    <property type="match status" value="1"/>
</dbReference>
<dbReference type="PANTHER" id="PTHR38036">
    <property type="entry name" value="UPF0250 PROTEIN YBED"/>
    <property type="match status" value="1"/>
</dbReference>
<dbReference type="PANTHER" id="PTHR38036:SF1">
    <property type="entry name" value="UPF0250 PROTEIN YBED"/>
    <property type="match status" value="1"/>
</dbReference>
<dbReference type="Pfam" id="PF04359">
    <property type="entry name" value="DUF493"/>
    <property type="match status" value="1"/>
</dbReference>
<dbReference type="SUPFAM" id="SSF117991">
    <property type="entry name" value="YbeD/HP0495-like"/>
    <property type="match status" value="1"/>
</dbReference>
<feature type="chain" id="PRO_1000082827" description="UPF0250 protein YbeD">
    <location>
        <begin position="1"/>
        <end position="87"/>
    </location>
</feature>
<name>YBED_SALAR</name>
<comment type="similarity">
    <text evidence="1">Belongs to the UPF0250 family.</text>
</comment>
<organism>
    <name type="scientific">Salmonella arizonae (strain ATCC BAA-731 / CDC346-86 / RSK2980)</name>
    <dbReference type="NCBI Taxonomy" id="41514"/>
    <lineage>
        <taxon>Bacteria</taxon>
        <taxon>Pseudomonadati</taxon>
        <taxon>Pseudomonadota</taxon>
        <taxon>Gammaproteobacteria</taxon>
        <taxon>Enterobacterales</taxon>
        <taxon>Enterobacteriaceae</taxon>
        <taxon>Salmonella</taxon>
    </lineage>
</organism>
<gene>
    <name evidence="1" type="primary">ybeD</name>
    <name type="ordered locus">SARI_02297</name>
</gene>
<reference key="1">
    <citation type="submission" date="2007-11" db="EMBL/GenBank/DDBJ databases">
        <authorList>
            <consortium name="The Salmonella enterica serovar Arizonae Genome Sequencing Project"/>
            <person name="McClelland M."/>
            <person name="Sanderson E.K."/>
            <person name="Porwollik S."/>
            <person name="Spieth J."/>
            <person name="Clifton W.S."/>
            <person name="Fulton R."/>
            <person name="Chunyan W."/>
            <person name="Wollam A."/>
            <person name="Shah N."/>
            <person name="Pepin K."/>
            <person name="Bhonagiri V."/>
            <person name="Nash W."/>
            <person name="Johnson M."/>
            <person name="Thiruvilangam P."/>
            <person name="Wilson R."/>
        </authorList>
    </citation>
    <scope>NUCLEOTIDE SEQUENCE [LARGE SCALE GENOMIC DNA]</scope>
    <source>
        <strain>ATCC BAA-731 / CDC346-86 / RSK2980</strain>
    </source>
</reference>
<keyword id="KW-1185">Reference proteome</keyword>